<organism>
    <name type="scientific">Saccharopolyspora erythraea (strain ATCC 11635 / DSM 40517 / JCM 4748 / NBRC 13426 / NCIMB 8594 / NRRL 2338)</name>
    <dbReference type="NCBI Taxonomy" id="405948"/>
    <lineage>
        <taxon>Bacteria</taxon>
        <taxon>Bacillati</taxon>
        <taxon>Actinomycetota</taxon>
        <taxon>Actinomycetes</taxon>
        <taxon>Pseudonocardiales</taxon>
        <taxon>Pseudonocardiaceae</taxon>
        <taxon>Saccharopolyspora</taxon>
    </lineage>
</organism>
<comment type="function">
    <text evidence="1">Major role in the synthesis of nucleoside triphosphates other than ATP. The ATP gamma phosphate is transferred to the NDP beta phosphate via a ping-pong mechanism, using a phosphorylated active-site intermediate.</text>
</comment>
<comment type="catalytic activity">
    <reaction evidence="1">
        <text>a 2'-deoxyribonucleoside 5'-diphosphate + ATP = a 2'-deoxyribonucleoside 5'-triphosphate + ADP</text>
        <dbReference type="Rhea" id="RHEA:44640"/>
        <dbReference type="ChEBI" id="CHEBI:30616"/>
        <dbReference type="ChEBI" id="CHEBI:61560"/>
        <dbReference type="ChEBI" id="CHEBI:73316"/>
        <dbReference type="ChEBI" id="CHEBI:456216"/>
        <dbReference type="EC" id="2.7.4.6"/>
    </reaction>
</comment>
<comment type="catalytic activity">
    <reaction evidence="1">
        <text>a ribonucleoside 5'-diphosphate + ATP = a ribonucleoside 5'-triphosphate + ADP</text>
        <dbReference type="Rhea" id="RHEA:18113"/>
        <dbReference type="ChEBI" id="CHEBI:30616"/>
        <dbReference type="ChEBI" id="CHEBI:57930"/>
        <dbReference type="ChEBI" id="CHEBI:61557"/>
        <dbReference type="ChEBI" id="CHEBI:456216"/>
        <dbReference type="EC" id="2.7.4.6"/>
    </reaction>
</comment>
<comment type="cofactor">
    <cofactor evidence="1">
        <name>Mg(2+)</name>
        <dbReference type="ChEBI" id="CHEBI:18420"/>
    </cofactor>
</comment>
<comment type="subunit">
    <text evidence="1">Homotetramer.</text>
</comment>
<comment type="subcellular location">
    <subcellularLocation>
        <location evidence="1">Cytoplasm</location>
    </subcellularLocation>
</comment>
<comment type="similarity">
    <text evidence="1">Belongs to the NDK family.</text>
</comment>
<evidence type="ECO:0000255" key="1">
    <source>
        <dbReference type="HAMAP-Rule" id="MF_00451"/>
    </source>
</evidence>
<feature type="chain" id="PRO_1000026290" description="Nucleoside diphosphate kinase">
    <location>
        <begin position="1"/>
        <end position="136"/>
    </location>
</feature>
<feature type="active site" description="Pros-phosphohistidine intermediate" evidence="1">
    <location>
        <position position="117"/>
    </location>
</feature>
<feature type="binding site" evidence="1">
    <location>
        <position position="10"/>
    </location>
    <ligand>
        <name>ATP</name>
        <dbReference type="ChEBI" id="CHEBI:30616"/>
    </ligand>
</feature>
<feature type="binding site" evidence="1">
    <location>
        <position position="58"/>
    </location>
    <ligand>
        <name>ATP</name>
        <dbReference type="ChEBI" id="CHEBI:30616"/>
    </ligand>
</feature>
<feature type="binding site" evidence="1">
    <location>
        <position position="86"/>
    </location>
    <ligand>
        <name>ATP</name>
        <dbReference type="ChEBI" id="CHEBI:30616"/>
    </ligand>
</feature>
<feature type="binding site" evidence="1">
    <location>
        <position position="92"/>
    </location>
    <ligand>
        <name>ATP</name>
        <dbReference type="ChEBI" id="CHEBI:30616"/>
    </ligand>
</feature>
<feature type="binding site" evidence="1">
    <location>
        <position position="104"/>
    </location>
    <ligand>
        <name>ATP</name>
        <dbReference type="ChEBI" id="CHEBI:30616"/>
    </ligand>
</feature>
<feature type="binding site" evidence="1">
    <location>
        <position position="114"/>
    </location>
    <ligand>
        <name>ATP</name>
        <dbReference type="ChEBI" id="CHEBI:30616"/>
    </ligand>
</feature>
<proteinExistence type="inferred from homology"/>
<gene>
    <name evidence="1" type="primary">ndk</name>
    <name type="ordered locus">SACE_1401</name>
</gene>
<keyword id="KW-0067">ATP-binding</keyword>
<keyword id="KW-0963">Cytoplasm</keyword>
<keyword id="KW-0418">Kinase</keyword>
<keyword id="KW-0460">Magnesium</keyword>
<keyword id="KW-0479">Metal-binding</keyword>
<keyword id="KW-0546">Nucleotide metabolism</keyword>
<keyword id="KW-0547">Nucleotide-binding</keyword>
<keyword id="KW-0597">Phosphoprotein</keyword>
<keyword id="KW-1185">Reference proteome</keyword>
<keyword id="KW-0808">Transferase</keyword>
<dbReference type="EC" id="2.7.4.6" evidence="1"/>
<dbReference type="EMBL" id="AM420293">
    <property type="protein sequence ID" value="CAM00723.1"/>
    <property type="molecule type" value="Genomic_DNA"/>
</dbReference>
<dbReference type="RefSeq" id="WP_009949419.1">
    <property type="nucleotide sequence ID" value="NC_009142.1"/>
</dbReference>
<dbReference type="SMR" id="A4F9J8"/>
<dbReference type="STRING" id="405948.SACE_1401"/>
<dbReference type="KEGG" id="sen:SACE_1401"/>
<dbReference type="eggNOG" id="COG0105">
    <property type="taxonomic scope" value="Bacteria"/>
</dbReference>
<dbReference type="HOGENOM" id="CLU_060216_6_3_11"/>
<dbReference type="OrthoDB" id="9801161at2"/>
<dbReference type="Proteomes" id="UP000006728">
    <property type="component" value="Chromosome"/>
</dbReference>
<dbReference type="GO" id="GO:0005737">
    <property type="term" value="C:cytoplasm"/>
    <property type="evidence" value="ECO:0007669"/>
    <property type="project" value="UniProtKB-SubCell"/>
</dbReference>
<dbReference type="GO" id="GO:0005524">
    <property type="term" value="F:ATP binding"/>
    <property type="evidence" value="ECO:0007669"/>
    <property type="project" value="UniProtKB-UniRule"/>
</dbReference>
<dbReference type="GO" id="GO:0046872">
    <property type="term" value="F:metal ion binding"/>
    <property type="evidence" value="ECO:0007669"/>
    <property type="project" value="UniProtKB-KW"/>
</dbReference>
<dbReference type="GO" id="GO:0004550">
    <property type="term" value="F:nucleoside diphosphate kinase activity"/>
    <property type="evidence" value="ECO:0007669"/>
    <property type="project" value="UniProtKB-UniRule"/>
</dbReference>
<dbReference type="GO" id="GO:0006241">
    <property type="term" value="P:CTP biosynthetic process"/>
    <property type="evidence" value="ECO:0007669"/>
    <property type="project" value="UniProtKB-UniRule"/>
</dbReference>
<dbReference type="GO" id="GO:0006183">
    <property type="term" value="P:GTP biosynthetic process"/>
    <property type="evidence" value="ECO:0007669"/>
    <property type="project" value="UniProtKB-UniRule"/>
</dbReference>
<dbReference type="GO" id="GO:0006228">
    <property type="term" value="P:UTP biosynthetic process"/>
    <property type="evidence" value="ECO:0007669"/>
    <property type="project" value="UniProtKB-UniRule"/>
</dbReference>
<dbReference type="CDD" id="cd04413">
    <property type="entry name" value="NDPk_I"/>
    <property type="match status" value="1"/>
</dbReference>
<dbReference type="FunFam" id="3.30.70.141:FF:000003">
    <property type="entry name" value="Nucleoside diphosphate kinase"/>
    <property type="match status" value="1"/>
</dbReference>
<dbReference type="Gene3D" id="3.30.70.141">
    <property type="entry name" value="Nucleoside diphosphate kinase-like domain"/>
    <property type="match status" value="1"/>
</dbReference>
<dbReference type="HAMAP" id="MF_00451">
    <property type="entry name" value="NDP_kinase"/>
    <property type="match status" value="1"/>
</dbReference>
<dbReference type="InterPro" id="IPR034907">
    <property type="entry name" value="NDK-like_dom"/>
</dbReference>
<dbReference type="InterPro" id="IPR036850">
    <property type="entry name" value="NDK-like_dom_sf"/>
</dbReference>
<dbReference type="InterPro" id="IPR001564">
    <property type="entry name" value="Nucleoside_diP_kinase"/>
</dbReference>
<dbReference type="NCBIfam" id="NF001908">
    <property type="entry name" value="PRK00668.1"/>
    <property type="match status" value="1"/>
</dbReference>
<dbReference type="PANTHER" id="PTHR11349">
    <property type="entry name" value="NUCLEOSIDE DIPHOSPHATE KINASE"/>
    <property type="match status" value="1"/>
</dbReference>
<dbReference type="Pfam" id="PF00334">
    <property type="entry name" value="NDK"/>
    <property type="match status" value="1"/>
</dbReference>
<dbReference type="PRINTS" id="PR01243">
    <property type="entry name" value="NUCDPKINASE"/>
</dbReference>
<dbReference type="SMART" id="SM00562">
    <property type="entry name" value="NDK"/>
    <property type="match status" value="1"/>
</dbReference>
<dbReference type="SUPFAM" id="SSF54919">
    <property type="entry name" value="Nucleoside diphosphate kinase, NDK"/>
    <property type="match status" value="1"/>
</dbReference>
<dbReference type="PROSITE" id="PS51374">
    <property type="entry name" value="NDPK_LIKE"/>
    <property type="match status" value="1"/>
</dbReference>
<protein>
    <recommendedName>
        <fullName evidence="1">Nucleoside diphosphate kinase</fullName>
        <shortName evidence="1">NDK</shortName>
        <shortName evidence="1">NDP kinase</shortName>
        <ecNumber evidence="1">2.7.4.6</ecNumber>
    </recommendedName>
    <alternativeName>
        <fullName evidence="1">Nucleoside-2-P kinase</fullName>
    </alternativeName>
</protein>
<reference key="1">
    <citation type="journal article" date="2007" name="Nat. Biotechnol.">
        <title>Complete genome sequence of the erythromycin-producing bacterium Saccharopolyspora erythraea NRRL23338.</title>
        <authorList>
            <person name="Oliynyk M."/>
            <person name="Samborskyy M."/>
            <person name="Lester J.B."/>
            <person name="Mironenko T."/>
            <person name="Scott N."/>
            <person name="Dickens S."/>
            <person name="Haydock S.F."/>
            <person name="Leadlay P.F."/>
        </authorList>
    </citation>
    <scope>NUCLEOTIDE SEQUENCE [LARGE SCALE GENOMIC DNA]</scope>
    <source>
        <strain>ATCC 11635 / DSM 40517 / JCM 4748 / NBRC 13426 / NCIMB 8594 / NRRL 2338</strain>
    </source>
</reference>
<accession>A4F9J8</accession>
<sequence length="136" mass="14810">MSERTLVLVKPDGVERGLVGEVIGRIERKGLKLVALELRQVEQQLAEQHYAEHDGKPFFGSLLEFITSGPVVAAVVEGPRAISAFRQLAGGTDPVDKAAPGSIRGDYGLEVQYNLVHGSDSAESAEREIKLWFPEL</sequence>
<name>NDK_SACEN</name>